<proteinExistence type="inferred from homology"/>
<gene>
    <name evidence="1" type="primary">rnc</name>
    <name type="ordered locus">KPK_1230</name>
</gene>
<evidence type="ECO:0000255" key="1">
    <source>
        <dbReference type="HAMAP-Rule" id="MF_00104"/>
    </source>
</evidence>
<comment type="function">
    <text evidence="1">Digests double-stranded RNA. Involved in the processing of primary rRNA transcript to yield the immediate precursors to the large and small rRNAs (23S and 16S). Processes some mRNAs, and tRNAs when they are encoded in the rRNA operon. Processes pre-crRNA and tracrRNA of type II CRISPR loci if present in the organism.</text>
</comment>
<comment type="catalytic activity">
    <reaction evidence="1">
        <text>Endonucleolytic cleavage to 5'-phosphomonoester.</text>
        <dbReference type="EC" id="3.1.26.3"/>
    </reaction>
</comment>
<comment type="cofactor">
    <cofactor evidence="1">
        <name>Mg(2+)</name>
        <dbReference type="ChEBI" id="CHEBI:18420"/>
    </cofactor>
</comment>
<comment type="subunit">
    <text evidence="1">Homodimer.</text>
</comment>
<comment type="subcellular location">
    <subcellularLocation>
        <location evidence="1">Cytoplasm</location>
    </subcellularLocation>
</comment>
<comment type="similarity">
    <text evidence="1">Belongs to the ribonuclease III family.</text>
</comment>
<accession>B5XNH0</accession>
<protein>
    <recommendedName>
        <fullName evidence="1">Ribonuclease 3</fullName>
        <ecNumber evidence="1">3.1.26.3</ecNumber>
    </recommendedName>
    <alternativeName>
        <fullName evidence="1">Ribonuclease III</fullName>
        <shortName evidence="1">RNase III</shortName>
    </alternativeName>
</protein>
<organism>
    <name type="scientific">Klebsiella pneumoniae (strain 342)</name>
    <dbReference type="NCBI Taxonomy" id="507522"/>
    <lineage>
        <taxon>Bacteria</taxon>
        <taxon>Pseudomonadati</taxon>
        <taxon>Pseudomonadota</taxon>
        <taxon>Gammaproteobacteria</taxon>
        <taxon>Enterobacterales</taxon>
        <taxon>Enterobacteriaceae</taxon>
        <taxon>Klebsiella/Raoultella group</taxon>
        <taxon>Klebsiella</taxon>
        <taxon>Klebsiella pneumoniae complex</taxon>
    </lineage>
</organism>
<name>RNC_KLEP3</name>
<feature type="chain" id="PRO_1000094116" description="Ribonuclease 3">
    <location>
        <begin position="1"/>
        <end position="226"/>
    </location>
</feature>
<feature type="domain" description="RNase III" evidence="1">
    <location>
        <begin position="6"/>
        <end position="128"/>
    </location>
</feature>
<feature type="domain" description="DRBM" evidence="1">
    <location>
        <begin position="155"/>
        <end position="225"/>
    </location>
</feature>
<feature type="active site" evidence="1">
    <location>
        <position position="45"/>
    </location>
</feature>
<feature type="active site" evidence="1">
    <location>
        <position position="117"/>
    </location>
</feature>
<feature type="binding site" evidence="1">
    <location>
        <position position="41"/>
    </location>
    <ligand>
        <name>Mg(2+)</name>
        <dbReference type="ChEBI" id="CHEBI:18420"/>
    </ligand>
</feature>
<feature type="binding site" evidence="1">
    <location>
        <position position="114"/>
    </location>
    <ligand>
        <name>Mg(2+)</name>
        <dbReference type="ChEBI" id="CHEBI:18420"/>
    </ligand>
</feature>
<feature type="binding site" evidence="1">
    <location>
        <position position="117"/>
    </location>
    <ligand>
        <name>Mg(2+)</name>
        <dbReference type="ChEBI" id="CHEBI:18420"/>
    </ligand>
</feature>
<reference key="1">
    <citation type="journal article" date="2008" name="PLoS Genet.">
        <title>Complete genome sequence of the N2-fixing broad host range endophyte Klebsiella pneumoniae 342 and virulence predictions verified in mice.</title>
        <authorList>
            <person name="Fouts D.E."/>
            <person name="Tyler H.L."/>
            <person name="DeBoy R.T."/>
            <person name="Daugherty S."/>
            <person name="Ren Q."/>
            <person name="Badger J.H."/>
            <person name="Durkin A.S."/>
            <person name="Huot H."/>
            <person name="Shrivastava S."/>
            <person name="Kothari S."/>
            <person name="Dodson R.J."/>
            <person name="Mohamoud Y."/>
            <person name="Khouri H."/>
            <person name="Roesch L.F.W."/>
            <person name="Krogfelt K.A."/>
            <person name="Struve C."/>
            <person name="Triplett E.W."/>
            <person name="Methe B.A."/>
        </authorList>
    </citation>
    <scope>NUCLEOTIDE SEQUENCE [LARGE SCALE GENOMIC DNA]</scope>
    <source>
        <strain>342</strain>
    </source>
</reference>
<keyword id="KW-0963">Cytoplasm</keyword>
<keyword id="KW-0255">Endonuclease</keyword>
<keyword id="KW-0378">Hydrolase</keyword>
<keyword id="KW-0460">Magnesium</keyword>
<keyword id="KW-0479">Metal-binding</keyword>
<keyword id="KW-0507">mRNA processing</keyword>
<keyword id="KW-0540">Nuclease</keyword>
<keyword id="KW-0694">RNA-binding</keyword>
<keyword id="KW-0698">rRNA processing</keyword>
<keyword id="KW-0699">rRNA-binding</keyword>
<keyword id="KW-0819">tRNA processing</keyword>
<sequence length="226" mass="25557">MNPIVINRLQRKLGYTFHHQELLQQALTHRSASSKHNERLEFLGDSILSFVIANALYHRFPRVDEGDMSRMRATLVRGNTLAEIAREFELGECLRLGPGELKSGGFRRESILADTVEALIGGVFLDSDIQNVERLILSWYQTRLDEISPGDKQKDPKTRLQEYLQGRHLPLPSYLVVQVRGEAHDQEFTIHCQVSGLSEPVVGTGSSRRKAEQAAAEQALKKLELE</sequence>
<dbReference type="EC" id="3.1.26.3" evidence="1"/>
<dbReference type="EMBL" id="CP000964">
    <property type="protein sequence ID" value="ACI11105.1"/>
    <property type="molecule type" value="Genomic_DNA"/>
</dbReference>
<dbReference type="SMR" id="B5XNH0"/>
<dbReference type="KEGG" id="kpe:KPK_1230"/>
<dbReference type="HOGENOM" id="CLU_000907_1_1_6"/>
<dbReference type="Proteomes" id="UP000001734">
    <property type="component" value="Chromosome"/>
</dbReference>
<dbReference type="GO" id="GO:0005737">
    <property type="term" value="C:cytoplasm"/>
    <property type="evidence" value="ECO:0007669"/>
    <property type="project" value="UniProtKB-SubCell"/>
</dbReference>
<dbReference type="GO" id="GO:0003725">
    <property type="term" value="F:double-stranded RNA binding"/>
    <property type="evidence" value="ECO:0007669"/>
    <property type="project" value="TreeGrafter"/>
</dbReference>
<dbReference type="GO" id="GO:0046872">
    <property type="term" value="F:metal ion binding"/>
    <property type="evidence" value="ECO:0007669"/>
    <property type="project" value="UniProtKB-KW"/>
</dbReference>
<dbReference type="GO" id="GO:0004525">
    <property type="term" value="F:ribonuclease III activity"/>
    <property type="evidence" value="ECO:0007669"/>
    <property type="project" value="UniProtKB-UniRule"/>
</dbReference>
<dbReference type="GO" id="GO:0019843">
    <property type="term" value="F:rRNA binding"/>
    <property type="evidence" value="ECO:0007669"/>
    <property type="project" value="UniProtKB-KW"/>
</dbReference>
<dbReference type="GO" id="GO:0006397">
    <property type="term" value="P:mRNA processing"/>
    <property type="evidence" value="ECO:0007669"/>
    <property type="project" value="UniProtKB-UniRule"/>
</dbReference>
<dbReference type="GO" id="GO:0010468">
    <property type="term" value="P:regulation of gene expression"/>
    <property type="evidence" value="ECO:0007669"/>
    <property type="project" value="TreeGrafter"/>
</dbReference>
<dbReference type="GO" id="GO:0006364">
    <property type="term" value="P:rRNA processing"/>
    <property type="evidence" value="ECO:0007669"/>
    <property type="project" value="UniProtKB-UniRule"/>
</dbReference>
<dbReference type="GO" id="GO:0008033">
    <property type="term" value="P:tRNA processing"/>
    <property type="evidence" value="ECO:0007669"/>
    <property type="project" value="UniProtKB-KW"/>
</dbReference>
<dbReference type="CDD" id="cd10845">
    <property type="entry name" value="DSRM_RNAse_III_family"/>
    <property type="match status" value="1"/>
</dbReference>
<dbReference type="CDD" id="cd00593">
    <property type="entry name" value="RIBOc"/>
    <property type="match status" value="1"/>
</dbReference>
<dbReference type="FunFam" id="1.10.1520.10:FF:000001">
    <property type="entry name" value="Ribonuclease 3"/>
    <property type="match status" value="1"/>
</dbReference>
<dbReference type="FunFam" id="3.30.160.20:FF:000003">
    <property type="entry name" value="Ribonuclease 3"/>
    <property type="match status" value="1"/>
</dbReference>
<dbReference type="Gene3D" id="3.30.160.20">
    <property type="match status" value="1"/>
</dbReference>
<dbReference type="Gene3D" id="1.10.1520.10">
    <property type="entry name" value="Ribonuclease III domain"/>
    <property type="match status" value="1"/>
</dbReference>
<dbReference type="HAMAP" id="MF_00104">
    <property type="entry name" value="RNase_III"/>
    <property type="match status" value="1"/>
</dbReference>
<dbReference type="InterPro" id="IPR014720">
    <property type="entry name" value="dsRBD_dom"/>
</dbReference>
<dbReference type="InterPro" id="IPR011907">
    <property type="entry name" value="RNase_III"/>
</dbReference>
<dbReference type="InterPro" id="IPR000999">
    <property type="entry name" value="RNase_III_dom"/>
</dbReference>
<dbReference type="InterPro" id="IPR036389">
    <property type="entry name" value="RNase_III_sf"/>
</dbReference>
<dbReference type="NCBIfam" id="TIGR02191">
    <property type="entry name" value="RNaseIII"/>
    <property type="match status" value="1"/>
</dbReference>
<dbReference type="PANTHER" id="PTHR11207:SF0">
    <property type="entry name" value="RIBONUCLEASE 3"/>
    <property type="match status" value="1"/>
</dbReference>
<dbReference type="PANTHER" id="PTHR11207">
    <property type="entry name" value="RIBONUCLEASE III"/>
    <property type="match status" value="1"/>
</dbReference>
<dbReference type="Pfam" id="PF00035">
    <property type="entry name" value="dsrm"/>
    <property type="match status" value="1"/>
</dbReference>
<dbReference type="Pfam" id="PF14622">
    <property type="entry name" value="Ribonucleas_3_3"/>
    <property type="match status" value="1"/>
</dbReference>
<dbReference type="SMART" id="SM00358">
    <property type="entry name" value="DSRM"/>
    <property type="match status" value="1"/>
</dbReference>
<dbReference type="SMART" id="SM00535">
    <property type="entry name" value="RIBOc"/>
    <property type="match status" value="1"/>
</dbReference>
<dbReference type="SUPFAM" id="SSF54768">
    <property type="entry name" value="dsRNA-binding domain-like"/>
    <property type="match status" value="1"/>
</dbReference>
<dbReference type="SUPFAM" id="SSF69065">
    <property type="entry name" value="RNase III domain-like"/>
    <property type="match status" value="1"/>
</dbReference>
<dbReference type="PROSITE" id="PS50137">
    <property type="entry name" value="DS_RBD"/>
    <property type="match status" value="1"/>
</dbReference>
<dbReference type="PROSITE" id="PS00517">
    <property type="entry name" value="RNASE_3_1"/>
    <property type="match status" value="1"/>
</dbReference>
<dbReference type="PROSITE" id="PS50142">
    <property type="entry name" value="RNASE_3_2"/>
    <property type="match status" value="1"/>
</dbReference>